<keyword id="KW-0028">Amino-acid biosynthesis</keyword>
<keyword id="KW-0067">ATP-binding</keyword>
<keyword id="KW-0963">Cytoplasm</keyword>
<keyword id="KW-0368">Histidine biosynthesis</keyword>
<keyword id="KW-0378">Hydrolase</keyword>
<keyword id="KW-0547">Nucleotide-binding</keyword>
<keyword id="KW-1185">Reference proteome</keyword>
<reference key="1">
    <citation type="journal article" date="2002" name="Proc. Natl. Acad. Sci. U.S.A.">
        <title>Genome sequence of the hyperthermophilic crenarchaeon Pyrobaculum aerophilum.</title>
        <authorList>
            <person name="Fitz-Gibbon S.T."/>
            <person name="Ladner H."/>
            <person name="Kim U.-J."/>
            <person name="Stetter K.O."/>
            <person name="Simon M.I."/>
            <person name="Miller J.H."/>
        </authorList>
    </citation>
    <scope>NUCLEOTIDE SEQUENCE [LARGE SCALE GENOMIC DNA]</scope>
    <source>
        <strain>ATCC 51768 / DSM 7523 / JCM 9630 / CIP 104966 / NBRC 100827 / IM2</strain>
    </source>
</reference>
<accession>Q8ZY18</accession>
<feature type="chain" id="PRO_0000136396" description="Phosphoribosyl-ATP pyrophosphatase">
    <location>
        <begin position="1"/>
        <end position="94"/>
    </location>
</feature>
<name>HIS2_PYRAE</name>
<gene>
    <name type="primary">hisE</name>
    <name type="ordered locus">PAE0986</name>
</gene>
<dbReference type="EC" id="3.6.1.31"/>
<dbReference type="EMBL" id="AE009441">
    <property type="protein sequence ID" value="AAL63178.1"/>
    <property type="molecule type" value="Genomic_DNA"/>
</dbReference>
<dbReference type="RefSeq" id="WP_011007650.1">
    <property type="nucleotide sequence ID" value="NC_003364.1"/>
</dbReference>
<dbReference type="SMR" id="Q8ZY18"/>
<dbReference type="FunCoup" id="Q8ZY18">
    <property type="interactions" value="75"/>
</dbReference>
<dbReference type="STRING" id="178306.PAE0986"/>
<dbReference type="EnsemblBacteria" id="AAL63178">
    <property type="protein sequence ID" value="AAL63178"/>
    <property type="gene ID" value="PAE0986"/>
</dbReference>
<dbReference type="GeneID" id="1465413"/>
<dbReference type="KEGG" id="pai:PAE0986"/>
<dbReference type="PATRIC" id="fig|178306.9.peg.733"/>
<dbReference type="eggNOG" id="arCOG02677">
    <property type="taxonomic scope" value="Archaea"/>
</dbReference>
<dbReference type="HOGENOM" id="CLU_123337_0_0_2"/>
<dbReference type="InParanoid" id="Q8ZY18"/>
<dbReference type="UniPathway" id="UPA00031">
    <property type="reaction ID" value="UER00007"/>
</dbReference>
<dbReference type="Proteomes" id="UP000002439">
    <property type="component" value="Chromosome"/>
</dbReference>
<dbReference type="GO" id="GO:0005737">
    <property type="term" value="C:cytoplasm"/>
    <property type="evidence" value="ECO:0007669"/>
    <property type="project" value="UniProtKB-SubCell"/>
</dbReference>
<dbReference type="GO" id="GO:0005524">
    <property type="term" value="F:ATP binding"/>
    <property type="evidence" value="ECO:0007669"/>
    <property type="project" value="UniProtKB-KW"/>
</dbReference>
<dbReference type="GO" id="GO:0004636">
    <property type="term" value="F:phosphoribosyl-ATP diphosphatase activity"/>
    <property type="evidence" value="ECO:0007669"/>
    <property type="project" value="UniProtKB-UniRule"/>
</dbReference>
<dbReference type="GO" id="GO:0000105">
    <property type="term" value="P:L-histidine biosynthetic process"/>
    <property type="evidence" value="ECO:0007669"/>
    <property type="project" value="UniProtKB-UniRule"/>
</dbReference>
<dbReference type="Gene3D" id="1.10.287.1080">
    <property type="entry name" value="MazG-like"/>
    <property type="match status" value="1"/>
</dbReference>
<dbReference type="HAMAP" id="MF_01020">
    <property type="entry name" value="HisE"/>
    <property type="match status" value="1"/>
</dbReference>
<dbReference type="InterPro" id="IPR008179">
    <property type="entry name" value="HisE"/>
</dbReference>
<dbReference type="InterPro" id="IPR021130">
    <property type="entry name" value="PRib-ATP_PPHydrolase-like"/>
</dbReference>
<dbReference type="NCBIfam" id="TIGR03188">
    <property type="entry name" value="histidine_hisI"/>
    <property type="match status" value="1"/>
</dbReference>
<dbReference type="PANTHER" id="PTHR42945">
    <property type="entry name" value="HISTIDINE BIOSYNTHESIS BIFUNCTIONAL PROTEIN"/>
    <property type="match status" value="1"/>
</dbReference>
<dbReference type="PANTHER" id="PTHR42945:SF1">
    <property type="entry name" value="HISTIDINE BIOSYNTHESIS BIFUNCTIONAL PROTEIN HIS7"/>
    <property type="match status" value="1"/>
</dbReference>
<dbReference type="Pfam" id="PF01503">
    <property type="entry name" value="PRA-PH"/>
    <property type="match status" value="1"/>
</dbReference>
<dbReference type="SUPFAM" id="SSF101386">
    <property type="entry name" value="all-alpha NTP pyrophosphatases"/>
    <property type="match status" value="1"/>
</dbReference>
<sequence>MSCQIFEKLEAVIRQRIAEGNPQSYTYRLYSSGVSTIARKVGEEAVEVAVAALAEGRERVVEESADLLYHLLVLLNSLGLSLGDVCKELERRMK</sequence>
<comment type="catalytic activity">
    <reaction>
        <text>1-(5-phospho-beta-D-ribosyl)-ATP + H2O = 1-(5-phospho-beta-D-ribosyl)-5'-AMP + diphosphate + H(+)</text>
        <dbReference type="Rhea" id="RHEA:22828"/>
        <dbReference type="ChEBI" id="CHEBI:15377"/>
        <dbReference type="ChEBI" id="CHEBI:15378"/>
        <dbReference type="ChEBI" id="CHEBI:33019"/>
        <dbReference type="ChEBI" id="CHEBI:59457"/>
        <dbReference type="ChEBI" id="CHEBI:73183"/>
        <dbReference type="EC" id="3.6.1.31"/>
    </reaction>
</comment>
<comment type="pathway">
    <text>Amino-acid biosynthesis; L-histidine biosynthesis; L-histidine from 5-phospho-alpha-D-ribose 1-diphosphate: step 2/9.</text>
</comment>
<comment type="subcellular location">
    <subcellularLocation>
        <location evidence="1">Cytoplasm</location>
    </subcellularLocation>
</comment>
<comment type="similarity">
    <text evidence="2">Belongs to the PRA-PH family.</text>
</comment>
<protein>
    <recommendedName>
        <fullName>Phosphoribosyl-ATP pyrophosphatase</fullName>
        <shortName>PRA-PH</shortName>
        <ecNumber>3.6.1.31</ecNumber>
    </recommendedName>
</protein>
<proteinExistence type="inferred from homology"/>
<evidence type="ECO:0000250" key="1"/>
<evidence type="ECO:0000305" key="2"/>
<organism>
    <name type="scientific">Pyrobaculum aerophilum (strain ATCC 51768 / DSM 7523 / JCM 9630 / CIP 104966 / NBRC 100827 / IM2)</name>
    <dbReference type="NCBI Taxonomy" id="178306"/>
    <lineage>
        <taxon>Archaea</taxon>
        <taxon>Thermoproteota</taxon>
        <taxon>Thermoprotei</taxon>
        <taxon>Thermoproteales</taxon>
        <taxon>Thermoproteaceae</taxon>
        <taxon>Pyrobaculum</taxon>
    </lineage>
</organism>